<name>CPN2_MOUSE</name>
<evidence type="ECO:0000250" key="1"/>
<evidence type="ECO:0000255" key="2"/>
<evidence type="ECO:0000269" key="3">
    <source>
    </source>
</evidence>
<evidence type="ECO:0000269" key="4">
    <source>
    </source>
</evidence>
<evidence type="ECO:0000305" key="5"/>
<comment type="function">
    <text evidence="1">The 83 kDa subunit binds and stabilizes the catalytic subunit at 37 degrees Celsius and keeps it in circulation. Under some circumstances it may be an allosteric modifier of the catalytic subunit (By similarity).</text>
</comment>
<comment type="subunit">
    <text evidence="1">Tetramer of two catalytic chains and two glycosylated inactive chains.</text>
</comment>
<comment type="subcellular location">
    <subcellularLocation>
        <location evidence="1">Secreted</location>
    </subcellularLocation>
</comment>
<comment type="sequence caution" evidence="5">
    <conflict type="erroneous initiation">
        <sequence resource="EMBL-CDS" id="AAH25836"/>
    </conflict>
</comment>
<comment type="sequence caution" evidence="5">
    <conflict type="erroneous initiation">
        <sequence resource="EMBL-CDS" id="BAB23775"/>
    </conflict>
</comment>
<protein>
    <recommendedName>
        <fullName>Carboxypeptidase N subunit 2</fullName>
    </recommendedName>
    <alternativeName>
        <fullName>Carboxypeptidase N 83 kDa chain</fullName>
    </alternativeName>
    <alternativeName>
        <fullName>Carboxypeptidase N large subunit</fullName>
    </alternativeName>
    <alternativeName>
        <fullName>Carboxypeptidase N polypeptide 2</fullName>
    </alternativeName>
    <alternativeName>
        <fullName>Carboxypeptidase N regulatory subunit</fullName>
    </alternativeName>
</protein>
<feature type="signal peptide" evidence="2">
    <location>
        <begin position="1"/>
        <end position="21"/>
    </location>
</feature>
<feature type="chain" id="PRO_0000020990" description="Carboxypeptidase N subunit 2">
    <location>
        <begin position="22"/>
        <end position="547"/>
    </location>
</feature>
<feature type="domain" description="LRRNT">
    <location>
        <begin position="22"/>
        <end position="49"/>
    </location>
</feature>
<feature type="repeat" description="LRR 1">
    <location>
        <begin position="98"/>
        <end position="119"/>
    </location>
</feature>
<feature type="repeat" description="LRR 2">
    <location>
        <begin position="122"/>
        <end position="143"/>
    </location>
</feature>
<feature type="repeat" description="LRR 3">
    <location>
        <begin position="146"/>
        <end position="167"/>
    </location>
</feature>
<feature type="repeat" description="LRR 4">
    <location>
        <begin position="170"/>
        <end position="191"/>
    </location>
</feature>
<feature type="repeat" description="LRR 5">
    <location>
        <begin position="194"/>
        <end position="215"/>
    </location>
</feature>
<feature type="repeat" description="LRR 6">
    <location>
        <begin position="218"/>
        <end position="239"/>
    </location>
</feature>
<feature type="repeat" description="LRR 7">
    <location>
        <begin position="242"/>
        <end position="263"/>
    </location>
</feature>
<feature type="repeat" description="LRR 8">
    <location>
        <begin position="266"/>
        <end position="287"/>
    </location>
</feature>
<feature type="repeat" description="LRR 9">
    <location>
        <begin position="290"/>
        <end position="311"/>
    </location>
</feature>
<feature type="repeat" description="LRR 10">
    <location>
        <begin position="314"/>
        <end position="335"/>
    </location>
</feature>
<feature type="repeat" description="LRR 11">
    <location>
        <begin position="338"/>
        <end position="359"/>
    </location>
</feature>
<feature type="repeat" description="LRR 12">
    <location>
        <begin position="362"/>
        <end position="383"/>
    </location>
</feature>
<feature type="domain" description="LRRCT">
    <location>
        <begin position="395"/>
        <end position="447"/>
    </location>
</feature>
<feature type="glycosylation site" description="N-linked (GlcNAc...) asparagine" evidence="3 4">
    <location>
        <position position="74"/>
    </location>
</feature>
<feature type="glycosylation site" description="N-linked (GlcNAc...) asparagine" evidence="3">
    <location>
        <position position="111"/>
    </location>
</feature>
<feature type="glycosylation site" description="N-linked (GlcNAc...) asparagine" evidence="3">
    <location>
        <position position="119"/>
    </location>
</feature>
<feature type="glycosylation site" description="N-linked (GlcNAc...) asparagine" evidence="2">
    <location>
        <position position="266"/>
    </location>
</feature>
<feature type="glycosylation site" description="N-linked (GlcNAc...) asparagine" evidence="2">
    <location>
        <position position="311"/>
    </location>
</feature>
<feature type="glycosylation site" description="N-linked (GlcNAc...) asparagine" evidence="3">
    <location>
        <position position="348"/>
    </location>
</feature>
<feature type="glycosylation site" description="N-linked (GlcNAc...) asparagine" evidence="3">
    <location>
        <position position="359"/>
    </location>
</feature>
<feature type="glycosylation site" description="N-linked (GlcNAc...) asparagine" evidence="3">
    <location>
        <position position="367"/>
    </location>
</feature>
<feature type="glycosylation site" description="N-linked (GlcNAc...) asparagine" evidence="2">
    <location>
        <position position="520"/>
    </location>
</feature>
<sequence length="547" mass="60479">MFPGAWLCWVSLLLLARLTQPCPVGCDCFGREVFCSDEQLADIPPDIPPHITDIVFVETAFTTVRTRAFSGSPNLTKVVFLNTQVRHLEPDAFGGLPRLQDLEITGSPVSNLSAHIFSNLSSLEKLTLDFDRLAGLPEDLFCHMDILESLQLQGNQLRTLPGRLFQSLRDLRTLNLAQNLLTQLPKGAFQSLTGLQMLKLSNNMLARLPEGALGSLSSLQELFLDGNAITELSPHLFSQLFSLEMLWLQHNAICHLPVSLFSSLHNLTFLSLKDNALRTLPEGLFAHNQGLLHLSLSYNQLETIPEGAFTNLSRLVSLTLSHNAITDLPEHVFRNLEQLVKLSLDSNNLTALHPALFHNLSRLQLLNLSRNQLTTLPGGIFDTNYDLFNLALLGNPWQCDCHLSYLTSWLRLYNNQISNTHTFCAGPAYLKGQLVPNLKQEQLICPVNPGHLSFRALGLDEGEPAGSWDLTVEGRAAHSQCAYSNPEGTVLLACEESRCRWLNIQLSSRDGSDSAAMVYNSSQEWGLRSSCGLLRVTVSIEAPAAGP</sequence>
<keyword id="KW-0325">Glycoprotein</keyword>
<keyword id="KW-0433">Leucine-rich repeat</keyword>
<keyword id="KW-1185">Reference proteome</keyword>
<keyword id="KW-0677">Repeat</keyword>
<keyword id="KW-0964">Secreted</keyword>
<keyword id="KW-0732">Signal</keyword>
<reference key="1">
    <citation type="journal article" date="2005" name="Science">
        <title>The transcriptional landscape of the mammalian genome.</title>
        <authorList>
            <person name="Carninci P."/>
            <person name="Kasukawa T."/>
            <person name="Katayama S."/>
            <person name="Gough J."/>
            <person name="Frith M.C."/>
            <person name="Maeda N."/>
            <person name="Oyama R."/>
            <person name="Ravasi T."/>
            <person name="Lenhard B."/>
            <person name="Wells C."/>
            <person name="Kodzius R."/>
            <person name="Shimokawa K."/>
            <person name="Bajic V.B."/>
            <person name="Brenner S.E."/>
            <person name="Batalov S."/>
            <person name="Forrest A.R."/>
            <person name="Zavolan M."/>
            <person name="Davis M.J."/>
            <person name="Wilming L.G."/>
            <person name="Aidinis V."/>
            <person name="Allen J.E."/>
            <person name="Ambesi-Impiombato A."/>
            <person name="Apweiler R."/>
            <person name="Aturaliya R.N."/>
            <person name="Bailey T.L."/>
            <person name="Bansal M."/>
            <person name="Baxter L."/>
            <person name="Beisel K.W."/>
            <person name="Bersano T."/>
            <person name="Bono H."/>
            <person name="Chalk A.M."/>
            <person name="Chiu K.P."/>
            <person name="Choudhary V."/>
            <person name="Christoffels A."/>
            <person name="Clutterbuck D.R."/>
            <person name="Crowe M.L."/>
            <person name="Dalla E."/>
            <person name="Dalrymple B.P."/>
            <person name="de Bono B."/>
            <person name="Della Gatta G."/>
            <person name="di Bernardo D."/>
            <person name="Down T."/>
            <person name="Engstrom P."/>
            <person name="Fagiolini M."/>
            <person name="Faulkner G."/>
            <person name="Fletcher C.F."/>
            <person name="Fukushima T."/>
            <person name="Furuno M."/>
            <person name="Futaki S."/>
            <person name="Gariboldi M."/>
            <person name="Georgii-Hemming P."/>
            <person name="Gingeras T.R."/>
            <person name="Gojobori T."/>
            <person name="Green R.E."/>
            <person name="Gustincich S."/>
            <person name="Harbers M."/>
            <person name="Hayashi Y."/>
            <person name="Hensch T.K."/>
            <person name="Hirokawa N."/>
            <person name="Hill D."/>
            <person name="Huminiecki L."/>
            <person name="Iacono M."/>
            <person name="Ikeo K."/>
            <person name="Iwama A."/>
            <person name="Ishikawa T."/>
            <person name="Jakt M."/>
            <person name="Kanapin A."/>
            <person name="Katoh M."/>
            <person name="Kawasawa Y."/>
            <person name="Kelso J."/>
            <person name="Kitamura H."/>
            <person name="Kitano H."/>
            <person name="Kollias G."/>
            <person name="Krishnan S.P."/>
            <person name="Kruger A."/>
            <person name="Kummerfeld S.K."/>
            <person name="Kurochkin I.V."/>
            <person name="Lareau L.F."/>
            <person name="Lazarevic D."/>
            <person name="Lipovich L."/>
            <person name="Liu J."/>
            <person name="Liuni S."/>
            <person name="McWilliam S."/>
            <person name="Madan Babu M."/>
            <person name="Madera M."/>
            <person name="Marchionni L."/>
            <person name="Matsuda H."/>
            <person name="Matsuzawa S."/>
            <person name="Miki H."/>
            <person name="Mignone F."/>
            <person name="Miyake S."/>
            <person name="Morris K."/>
            <person name="Mottagui-Tabar S."/>
            <person name="Mulder N."/>
            <person name="Nakano N."/>
            <person name="Nakauchi H."/>
            <person name="Ng P."/>
            <person name="Nilsson R."/>
            <person name="Nishiguchi S."/>
            <person name="Nishikawa S."/>
            <person name="Nori F."/>
            <person name="Ohara O."/>
            <person name="Okazaki Y."/>
            <person name="Orlando V."/>
            <person name="Pang K.C."/>
            <person name="Pavan W.J."/>
            <person name="Pavesi G."/>
            <person name="Pesole G."/>
            <person name="Petrovsky N."/>
            <person name="Piazza S."/>
            <person name="Reed J."/>
            <person name="Reid J.F."/>
            <person name="Ring B.Z."/>
            <person name="Ringwald M."/>
            <person name="Rost B."/>
            <person name="Ruan Y."/>
            <person name="Salzberg S.L."/>
            <person name="Sandelin A."/>
            <person name="Schneider C."/>
            <person name="Schoenbach C."/>
            <person name="Sekiguchi K."/>
            <person name="Semple C.A."/>
            <person name="Seno S."/>
            <person name="Sessa L."/>
            <person name="Sheng Y."/>
            <person name="Shibata Y."/>
            <person name="Shimada H."/>
            <person name="Shimada K."/>
            <person name="Silva D."/>
            <person name="Sinclair B."/>
            <person name="Sperling S."/>
            <person name="Stupka E."/>
            <person name="Sugiura K."/>
            <person name="Sultana R."/>
            <person name="Takenaka Y."/>
            <person name="Taki K."/>
            <person name="Tammoja K."/>
            <person name="Tan S.L."/>
            <person name="Tang S."/>
            <person name="Taylor M.S."/>
            <person name="Tegner J."/>
            <person name="Teichmann S.A."/>
            <person name="Ueda H.R."/>
            <person name="van Nimwegen E."/>
            <person name="Verardo R."/>
            <person name="Wei C.L."/>
            <person name="Yagi K."/>
            <person name="Yamanishi H."/>
            <person name="Zabarovsky E."/>
            <person name="Zhu S."/>
            <person name="Zimmer A."/>
            <person name="Hide W."/>
            <person name="Bult C."/>
            <person name="Grimmond S.M."/>
            <person name="Teasdale R.D."/>
            <person name="Liu E.T."/>
            <person name="Brusic V."/>
            <person name="Quackenbush J."/>
            <person name="Wahlestedt C."/>
            <person name="Mattick J.S."/>
            <person name="Hume D.A."/>
            <person name="Kai C."/>
            <person name="Sasaki D."/>
            <person name="Tomaru Y."/>
            <person name="Fukuda S."/>
            <person name="Kanamori-Katayama M."/>
            <person name="Suzuki M."/>
            <person name="Aoki J."/>
            <person name="Arakawa T."/>
            <person name="Iida J."/>
            <person name="Imamura K."/>
            <person name="Itoh M."/>
            <person name="Kato T."/>
            <person name="Kawaji H."/>
            <person name="Kawagashira N."/>
            <person name="Kawashima T."/>
            <person name="Kojima M."/>
            <person name="Kondo S."/>
            <person name="Konno H."/>
            <person name="Nakano K."/>
            <person name="Ninomiya N."/>
            <person name="Nishio T."/>
            <person name="Okada M."/>
            <person name="Plessy C."/>
            <person name="Shibata K."/>
            <person name="Shiraki T."/>
            <person name="Suzuki S."/>
            <person name="Tagami M."/>
            <person name="Waki K."/>
            <person name="Watahiki A."/>
            <person name="Okamura-Oho Y."/>
            <person name="Suzuki H."/>
            <person name="Kawai J."/>
            <person name="Hayashizaki Y."/>
        </authorList>
    </citation>
    <scope>NUCLEOTIDE SEQUENCE [LARGE SCALE MRNA]</scope>
    <source>
        <strain>C57BL/6J</strain>
        <tissue>Liver</tissue>
    </source>
</reference>
<reference key="2">
    <citation type="journal article" date="2004" name="Genome Res.">
        <title>The status, quality, and expansion of the NIH full-length cDNA project: the Mammalian Gene Collection (MGC).</title>
        <authorList>
            <consortium name="The MGC Project Team"/>
        </authorList>
    </citation>
    <scope>NUCLEOTIDE SEQUENCE [LARGE SCALE MRNA]</scope>
    <source>
        <strain>FVB/N</strain>
        <tissue>Brain</tissue>
        <tissue>Liver</tissue>
    </source>
</reference>
<reference key="3">
    <citation type="journal article" date="2006" name="J. Proteome Res.">
        <title>Proteome-wide characterization of N-glycosylation events by diagonal chromatography.</title>
        <authorList>
            <person name="Ghesquiere B."/>
            <person name="Van Damme J."/>
            <person name="Martens L."/>
            <person name="Vandekerckhove J."/>
            <person name="Gevaert K."/>
        </authorList>
    </citation>
    <scope>GLYCOSYLATION [LARGE SCALE ANALYSIS] AT ASN-74; ASN-111; ASN-119; ASN-348; ASN-359 AND ASN-367</scope>
    <source>
        <strain>C57BL/6J</strain>
        <tissue>Plasma</tissue>
    </source>
</reference>
<reference key="4">
    <citation type="journal article" date="2007" name="J. Proteome Res.">
        <title>Enhanced analysis of the mouse plasma proteome using cysteine-containing tryptic glycopeptides.</title>
        <authorList>
            <person name="Bernhard O.K."/>
            <person name="Kapp E.A."/>
            <person name="Simpson R.J."/>
        </authorList>
    </citation>
    <scope>GLYCOSYLATION [LARGE SCALE ANALYSIS] AT ASN-74</scope>
    <source>
        <strain>C57BL/6J</strain>
        <tissue>Plasma</tissue>
    </source>
</reference>
<reference key="5">
    <citation type="journal article" date="2010" name="Cell">
        <title>A tissue-specific atlas of mouse protein phosphorylation and expression.</title>
        <authorList>
            <person name="Huttlin E.L."/>
            <person name="Jedrychowski M.P."/>
            <person name="Elias J.E."/>
            <person name="Goswami T."/>
            <person name="Rad R."/>
            <person name="Beausoleil S.A."/>
            <person name="Villen J."/>
            <person name="Haas W."/>
            <person name="Sowa M.E."/>
            <person name="Gygi S.P."/>
        </authorList>
    </citation>
    <scope>IDENTIFICATION BY MASS SPECTROMETRY [LARGE SCALE ANALYSIS]</scope>
    <source>
        <tissue>Brown adipose tissue</tissue>
        <tissue>Heart</tissue>
        <tissue>Kidney</tissue>
        <tissue>Liver</tissue>
        <tissue>Lung</tissue>
        <tissue>Spleen</tissue>
        <tissue>Testis</tissue>
    </source>
</reference>
<accession>Q9DBB9</accession>
<accession>B2RR89</accession>
<accession>Q8R113</accession>
<dbReference type="EMBL" id="AK005049">
    <property type="protein sequence ID" value="BAB23775.1"/>
    <property type="status" value="ALT_INIT"/>
    <property type="molecule type" value="mRNA"/>
</dbReference>
<dbReference type="EMBL" id="BC025836">
    <property type="protein sequence ID" value="AAH25836.1"/>
    <property type="status" value="ALT_INIT"/>
    <property type="molecule type" value="mRNA"/>
</dbReference>
<dbReference type="EMBL" id="BC138287">
    <property type="protein sequence ID" value="AAI38288.1"/>
    <property type="molecule type" value="mRNA"/>
</dbReference>
<dbReference type="EMBL" id="BC138288">
    <property type="protein sequence ID" value="AAI38289.1"/>
    <property type="molecule type" value="mRNA"/>
</dbReference>
<dbReference type="CCDS" id="CCDS49819.1"/>
<dbReference type="RefSeq" id="NP_082180.2">
    <property type="nucleotide sequence ID" value="NM_027904.3"/>
</dbReference>
<dbReference type="RefSeq" id="XP_006522648.1">
    <property type="nucleotide sequence ID" value="XM_006522585.1"/>
</dbReference>
<dbReference type="SMR" id="Q9DBB9"/>
<dbReference type="BioGRID" id="214904">
    <property type="interactions" value="3"/>
</dbReference>
<dbReference type="FunCoup" id="Q9DBB9">
    <property type="interactions" value="140"/>
</dbReference>
<dbReference type="STRING" id="10090.ENSMUSP00000069318"/>
<dbReference type="GlyCosmos" id="Q9DBB9">
    <property type="glycosylation" value="9 sites, No reported glycans"/>
</dbReference>
<dbReference type="GlyGen" id="Q9DBB9">
    <property type="glycosylation" value="9 sites, 2 N-linked glycans (4 sites)"/>
</dbReference>
<dbReference type="iPTMnet" id="Q9DBB9"/>
<dbReference type="PhosphoSitePlus" id="Q9DBB9"/>
<dbReference type="CPTAC" id="non-CPTAC-3428"/>
<dbReference type="CPTAC" id="non-CPTAC-5598"/>
<dbReference type="jPOST" id="Q9DBB9"/>
<dbReference type="PaxDb" id="10090-ENSMUSP00000069318"/>
<dbReference type="PeptideAtlas" id="Q9DBB9"/>
<dbReference type="ProteomicsDB" id="285291"/>
<dbReference type="Antibodypedia" id="856">
    <property type="antibodies" value="189 antibodies from 29 providers"/>
</dbReference>
<dbReference type="DNASU" id="71756"/>
<dbReference type="Ensembl" id="ENSMUST00000064856.9">
    <property type="protein sequence ID" value="ENSMUSP00000069318.8"/>
    <property type="gene ID" value="ENSMUSG00000023176.10"/>
</dbReference>
<dbReference type="GeneID" id="71756"/>
<dbReference type="KEGG" id="mmu:71756"/>
<dbReference type="UCSC" id="uc007ywm.1">
    <property type="organism name" value="mouse"/>
</dbReference>
<dbReference type="AGR" id="MGI:1919006"/>
<dbReference type="CTD" id="1370"/>
<dbReference type="MGI" id="MGI:1919006">
    <property type="gene designation" value="Cpn2"/>
</dbReference>
<dbReference type="VEuPathDB" id="HostDB:ENSMUSG00000023176"/>
<dbReference type="eggNOG" id="KOG0619">
    <property type="taxonomic scope" value="Eukaryota"/>
</dbReference>
<dbReference type="GeneTree" id="ENSGT00940000163072"/>
<dbReference type="HOGENOM" id="CLU_000288_18_6_1"/>
<dbReference type="InParanoid" id="Q9DBB9"/>
<dbReference type="OMA" id="REVFCSD"/>
<dbReference type="OrthoDB" id="6363818at2759"/>
<dbReference type="PhylomeDB" id="Q9DBB9"/>
<dbReference type="TreeFam" id="TF351124"/>
<dbReference type="Reactome" id="R-MMU-977606">
    <property type="pathway name" value="Regulation of Complement cascade"/>
</dbReference>
<dbReference type="BioGRID-ORCS" id="71756">
    <property type="hits" value="5 hits in 78 CRISPR screens"/>
</dbReference>
<dbReference type="PRO" id="PR:Q9DBB9"/>
<dbReference type="Proteomes" id="UP000000589">
    <property type="component" value="Chromosome 16"/>
</dbReference>
<dbReference type="RNAct" id="Q9DBB9">
    <property type="molecule type" value="protein"/>
</dbReference>
<dbReference type="Bgee" id="ENSMUSG00000023176">
    <property type="expression patterns" value="Expressed in left lobe of liver and 26 other cell types or tissues"/>
</dbReference>
<dbReference type="GO" id="GO:0062023">
    <property type="term" value="C:collagen-containing extracellular matrix"/>
    <property type="evidence" value="ECO:0007005"/>
    <property type="project" value="BHF-UCL"/>
</dbReference>
<dbReference type="GO" id="GO:0005576">
    <property type="term" value="C:extracellular region"/>
    <property type="evidence" value="ECO:0007669"/>
    <property type="project" value="UniProtKB-SubCell"/>
</dbReference>
<dbReference type="FunFam" id="3.80.10.10:FF:000549">
    <property type="entry name" value="Carboxypeptidase N subunit 2"/>
    <property type="match status" value="1"/>
</dbReference>
<dbReference type="FunFam" id="3.80.10.10:FF:000720">
    <property type="entry name" value="Carboxypeptidase N subunit 2"/>
    <property type="match status" value="1"/>
</dbReference>
<dbReference type="Gene3D" id="3.80.10.10">
    <property type="entry name" value="Ribonuclease Inhibitor"/>
    <property type="match status" value="2"/>
</dbReference>
<dbReference type="InterPro" id="IPR000483">
    <property type="entry name" value="Cys-rich_flank_reg_C"/>
</dbReference>
<dbReference type="InterPro" id="IPR001611">
    <property type="entry name" value="Leu-rich_rpt"/>
</dbReference>
<dbReference type="InterPro" id="IPR003591">
    <property type="entry name" value="Leu-rich_rpt_typical-subtyp"/>
</dbReference>
<dbReference type="InterPro" id="IPR032675">
    <property type="entry name" value="LRR_dom_sf"/>
</dbReference>
<dbReference type="InterPro" id="IPR050541">
    <property type="entry name" value="LRR_TM_domain-containing"/>
</dbReference>
<dbReference type="InterPro" id="IPR000372">
    <property type="entry name" value="LRRNT"/>
</dbReference>
<dbReference type="PANTHER" id="PTHR24369">
    <property type="entry name" value="ANTIGEN BSP, PUTATIVE-RELATED"/>
    <property type="match status" value="1"/>
</dbReference>
<dbReference type="PANTHER" id="PTHR24369:SF157">
    <property type="entry name" value="LRRCT DOMAIN-CONTAINING PROTEIN"/>
    <property type="match status" value="1"/>
</dbReference>
<dbReference type="Pfam" id="PF00560">
    <property type="entry name" value="LRR_1"/>
    <property type="match status" value="2"/>
</dbReference>
<dbReference type="Pfam" id="PF13855">
    <property type="entry name" value="LRR_8"/>
    <property type="match status" value="2"/>
</dbReference>
<dbReference type="SMART" id="SM00364">
    <property type="entry name" value="LRR_BAC"/>
    <property type="match status" value="8"/>
</dbReference>
<dbReference type="SMART" id="SM00369">
    <property type="entry name" value="LRR_TYP"/>
    <property type="match status" value="12"/>
</dbReference>
<dbReference type="SMART" id="SM00082">
    <property type="entry name" value="LRRCT"/>
    <property type="match status" value="1"/>
</dbReference>
<dbReference type="SMART" id="SM00013">
    <property type="entry name" value="LRRNT"/>
    <property type="match status" value="1"/>
</dbReference>
<dbReference type="SUPFAM" id="SSF52058">
    <property type="entry name" value="L domain-like"/>
    <property type="match status" value="1"/>
</dbReference>
<dbReference type="PROSITE" id="PS51450">
    <property type="entry name" value="LRR"/>
    <property type="match status" value="11"/>
</dbReference>
<gene>
    <name type="primary">Cpn2</name>
</gene>
<proteinExistence type="evidence at protein level"/>
<organism>
    <name type="scientific">Mus musculus</name>
    <name type="common">Mouse</name>
    <dbReference type="NCBI Taxonomy" id="10090"/>
    <lineage>
        <taxon>Eukaryota</taxon>
        <taxon>Metazoa</taxon>
        <taxon>Chordata</taxon>
        <taxon>Craniata</taxon>
        <taxon>Vertebrata</taxon>
        <taxon>Euteleostomi</taxon>
        <taxon>Mammalia</taxon>
        <taxon>Eutheria</taxon>
        <taxon>Euarchontoglires</taxon>
        <taxon>Glires</taxon>
        <taxon>Rodentia</taxon>
        <taxon>Myomorpha</taxon>
        <taxon>Muroidea</taxon>
        <taxon>Muridae</taxon>
        <taxon>Murinae</taxon>
        <taxon>Mus</taxon>
        <taxon>Mus</taxon>
    </lineage>
</organism>